<geneLocation type="mitochondrion"/>
<dbReference type="EMBL" id="M68929">
    <property type="protein sequence ID" value="AAC09424.1"/>
    <property type="molecule type" value="Genomic_DNA"/>
</dbReference>
<dbReference type="PIR" id="S41139">
    <property type="entry name" value="S41139"/>
</dbReference>
<dbReference type="RefSeq" id="NP_054427.1">
    <property type="nucleotide sequence ID" value="NC_001660.1"/>
</dbReference>
<dbReference type="SMR" id="P26870"/>
<dbReference type="GeneID" id="2702476"/>
<dbReference type="GO" id="GO:0005739">
    <property type="term" value="C:mitochondrion"/>
    <property type="evidence" value="ECO:0007669"/>
    <property type="project" value="UniProtKB-SubCell"/>
</dbReference>
<dbReference type="GO" id="GO:1990904">
    <property type="term" value="C:ribonucleoprotein complex"/>
    <property type="evidence" value="ECO:0007669"/>
    <property type="project" value="UniProtKB-KW"/>
</dbReference>
<dbReference type="GO" id="GO:0005840">
    <property type="term" value="C:ribosome"/>
    <property type="evidence" value="ECO:0007669"/>
    <property type="project" value="UniProtKB-KW"/>
</dbReference>
<dbReference type="GO" id="GO:0003735">
    <property type="term" value="F:structural constituent of ribosome"/>
    <property type="evidence" value="ECO:0007669"/>
    <property type="project" value="InterPro"/>
</dbReference>
<dbReference type="GO" id="GO:0006412">
    <property type="term" value="P:translation"/>
    <property type="evidence" value="ECO:0007669"/>
    <property type="project" value="InterPro"/>
</dbReference>
<dbReference type="Gene3D" id="3.30.420.80">
    <property type="entry name" value="Ribosomal protein S11"/>
    <property type="match status" value="1"/>
</dbReference>
<dbReference type="HAMAP" id="MF_01310">
    <property type="entry name" value="Ribosomal_uS11"/>
    <property type="match status" value="1"/>
</dbReference>
<dbReference type="InterPro" id="IPR001971">
    <property type="entry name" value="Ribosomal_uS11"/>
</dbReference>
<dbReference type="InterPro" id="IPR018102">
    <property type="entry name" value="Ribosomal_uS11_CS"/>
</dbReference>
<dbReference type="InterPro" id="IPR036967">
    <property type="entry name" value="Ribosomal_uS11_sf"/>
</dbReference>
<dbReference type="NCBIfam" id="NF003698">
    <property type="entry name" value="PRK05309.1"/>
    <property type="match status" value="1"/>
</dbReference>
<dbReference type="PANTHER" id="PTHR11759">
    <property type="entry name" value="40S RIBOSOMAL PROTEIN S14/30S RIBOSOMAL PROTEIN S11"/>
    <property type="match status" value="1"/>
</dbReference>
<dbReference type="Pfam" id="PF00411">
    <property type="entry name" value="Ribosomal_S11"/>
    <property type="match status" value="1"/>
</dbReference>
<dbReference type="PIRSF" id="PIRSF002131">
    <property type="entry name" value="Ribosomal_S11"/>
    <property type="match status" value="1"/>
</dbReference>
<dbReference type="SUPFAM" id="SSF53137">
    <property type="entry name" value="Translational machinery components"/>
    <property type="match status" value="1"/>
</dbReference>
<dbReference type="PROSITE" id="PS00054">
    <property type="entry name" value="RIBOSOMAL_S11"/>
    <property type="match status" value="1"/>
</dbReference>
<keyword id="KW-0496">Mitochondrion</keyword>
<keyword id="KW-0687">Ribonucleoprotein</keyword>
<keyword id="KW-0689">Ribosomal protein</keyword>
<name>RT11_MARPO</name>
<accession>P26870</accession>
<evidence type="ECO:0000305" key="1"/>
<proteinExistence type="inferred from homology"/>
<reference key="1">
    <citation type="journal article" date="1992" name="J. Mol. Biol.">
        <title>Gene organization deduced from the complete sequence of liverwort Marchantia polymorpha mitochondrial DNA. A primitive form of plant mitochondrial genome.</title>
        <authorList>
            <person name="Oda K."/>
            <person name="Yamato K."/>
            <person name="Ohta E."/>
            <person name="Nakamura Y."/>
            <person name="Takemura M."/>
            <person name="Nozato N."/>
            <person name="Akashi K."/>
            <person name="Kanegae T."/>
            <person name="Ogura Y."/>
            <person name="Kohchi T."/>
            <person name="Ohyama K."/>
        </authorList>
    </citation>
    <scope>NUCLEOTIDE SEQUENCE [GENOMIC DNA]</scope>
</reference>
<reference key="2">
    <citation type="journal article" date="1992" name="Nucleic Acids Res.">
        <title>Gene clusters for ribosomal proteins in the mitochondrial genome of a liverwort, Marchantia polymorpha.</title>
        <authorList>
            <person name="Takemura M."/>
            <person name="Oda K."/>
            <person name="Yamato K."/>
            <person name="Ohta E."/>
            <person name="Nakamura Y."/>
            <person name="Nozato N."/>
            <person name="Akashi K."/>
            <person name="Ohyama K."/>
        </authorList>
    </citation>
    <scope>NUCLEOTIDE SEQUENCE [GENOMIC DNA]</scope>
</reference>
<feature type="chain" id="PRO_0000123332" description="Small ribosomal subunit protein uS11m">
    <location>
        <begin position="1"/>
        <end position="125"/>
    </location>
</feature>
<comment type="subcellular location">
    <subcellularLocation>
        <location>Mitochondrion</location>
    </subcellularLocation>
</comment>
<comment type="similarity">
    <text evidence="1">Belongs to the universal ribosomal protein uS11 family.</text>
</comment>
<sequence length="125" mass="13756">MQKKHGITNMQKKHCITYIQSTFGNTIITLTDYNGNTKTWSSSGSVGFKGSRRSTNYAAQATAENAARVAIQLGFKFVEVRIKGLGYGKESSLRGLKLGGLIITKIRDVTPTPHNGCRPPKKRRV</sequence>
<organism>
    <name type="scientific">Marchantia polymorpha</name>
    <name type="common">Common liverwort</name>
    <name type="synonym">Marchantia aquatica</name>
    <dbReference type="NCBI Taxonomy" id="3197"/>
    <lineage>
        <taxon>Eukaryota</taxon>
        <taxon>Viridiplantae</taxon>
        <taxon>Streptophyta</taxon>
        <taxon>Embryophyta</taxon>
        <taxon>Marchantiophyta</taxon>
        <taxon>Marchantiopsida</taxon>
        <taxon>Marchantiidae</taxon>
        <taxon>Marchantiales</taxon>
        <taxon>Marchantiaceae</taxon>
        <taxon>Marchantia</taxon>
    </lineage>
</organism>
<protein>
    <recommendedName>
        <fullName evidence="1">Small ribosomal subunit protein uS11m</fullName>
    </recommendedName>
    <alternativeName>
        <fullName>Ribosomal protein S11, mitochondrial</fullName>
    </alternativeName>
</protein>
<gene>
    <name type="primary">RPS11</name>
</gene>